<dbReference type="EC" id="3.5.3.4" evidence="1"/>
<dbReference type="EMBL" id="CP000075">
    <property type="protein sequence ID" value="AAY36854.1"/>
    <property type="molecule type" value="Genomic_DNA"/>
</dbReference>
<dbReference type="RefSeq" id="WP_011267251.1">
    <property type="nucleotide sequence ID" value="NC_007005.1"/>
</dbReference>
<dbReference type="RefSeq" id="YP_234892.1">
    <property type="nucleotide sequence ID" value="NC_007005.1"/>
</dbReference>
<dbReference type="SMR" id="Q4ZVG8"/>
<dbReference type="STRING" id="205918.Psyr_1807"/>
<dbReference type="KEGG" id="psb:Psyr_1807"/>
<dbReference type="PATRIC" id="fig|205918.7.peg.1850"/>
<dbReference type="eggNOG" id="COG4266">
    <property type="taxonomic scope" value="Bacteria"/>
</dbReference>
<dbReference type="HOGENOM" id="CLU_038797_1_2_6"/>
<dbReference type="OrthoDB" id="2078334at2"/>
<dbReference type="UniPathway" id="UPA00395">
    <property type="reaction ID" value="UER00654"/>
</dbReference>
<dbReference type="Proteomes" id="UP000000426">
    <property type="component" value="Chromosome"/>
</dbReference>
<dbReference type="GO" id="GO:0004037">
    <property type="term" value="F:allantoicase activity"/>
    <property type="evidence" value="ECO:0007669"/>
    <property type="project" value="UniProtKB-UniRule"/>
</dbReference>
<dbReference type="GO" id="GO:0000256">
    <property type="term" value="P:allantoin catabolic process"/>
    <property type="evidence" value="ECO:0007669"/>
    <property type="project" value="UniProtKB-UniRule"/>
</dbReference>
<dbReference type="GO" id="GO:0006144">
    <property type="term" value="P:purine nucleobase metabolic process"/>
    <property type="evidence" value="ECO:0007669"/>
    <property type="project" value="UniProtKB-KW"/>
</dbReference>
<dbReference type="FunFam" id="2.60.120.260:FF:000059">
    <property type="entry name" value="Probable allantoicase"/>
    <property type="match status" value="1"/>
</dbReference>
<dbReference type="FunFam" id="2.60.120.260:FF:000090">
    <property type="entry name" value="Probable allantoicase"/>
    <property type="match status" value="1"/>
</dbReference>
<dbReference type="Gene3D" id="2.60.120.260">
    <property type="entry name" value="Galactose-binding domain-like"/>
    <property type="match status" value="2"/>
</dbReference>
<dbReference type="HAMAP" id="MF_00813">
    <property type="entry name" value="Allantoicase"/>
    <property type="match status" value="1"/>
</dbReference>
<dbReference type="InterPro" id="IPR005164">
    <property type="entry name" value="Allantoicase"/>
</dbReference>
<dbReference type="InterPro" id="IPR015908">
    <property type="entry name" value="Allantoicase_dom"/>
</dbReference>
<dbReference type="InterPro" id="IPR008979">
    <property type="entry name" value="Galactose-bd-like_sf"/>
</dbReference>
<dbReference type="NCBIfam" id="TIGR02961">
    <property type="entry name" value="allantoicase"/>
    <property type="match status" value="1"/>
</dbReference>
<dbReference type="PANTHER" id="PTHR12045">
    <property type="entry name" value="ALLANTOICASE"/>
    <property type="match status" value="1"/>
</dbReference>
<dbReference type="PANTHER" id="PTHR12045:SF3">
    <property type="entry name" value="INACTIVE ALLANTOICASE-RELATED"/>
    <property type="match status" value="1"/>
</dbReference>
<dbReference type="Pfam" id="PF03561">
    <property type="entry name" value="Allantoicase"/>
    <property type="match status" value="2"/>
</dbReference>
<dbReference type="PIRSF" id="PIRSF016516">
    <property type="entry name" value="Allantoicase"/>
    <property type="match status" value="1"/>
</dbReference>
<dbReference type="SUPFAM" id="SSF49785">
    <property type="entry name" value="Galactose-binding domain-like"/>
    <property type="match status" value="2"/>
</dbReference>
<accession>Q4ZVG8</accession>
<feature type="chain" id="PRO_1000062286" description="Probable allantoicase">
    <location>
        <begin position="1"/>
        <end position="331"/>
    </location>
</feature>
<comment type="catalytic activity">
    <reaction evidence="1">
        <text>allantoate + H2O = (S)-ureidoglycolate + urea</text>
        <dbReference type="Rhea" id="RHEA:11016"/>
        <dbReference type="ChEBI" id="CHEBI:15377"/>
        <dbReference type="ChEBI" id="CHEBI:16199"/>
        <dbReference type="ChEBI" id="CHEBI:17536"/>
        <dbReference type="ChEBI" id="CHEBI:57296"/>
        <dbReference type="EC" id="3.5.3.4"/>
    </reaction>
</comment>
<comment type="pathway">
    <text evidence="1">Nitrogen metabolism; (S)-allantoin degradation; (S)-ureidoglycolate from allantoate (aminidohydrolase route): step 1/1.</text>
</comment>
<comment type="similarity">
    <text evidence="1">Belongs to the allantoicase family.</text>
</comment>
<sequence>MKVYAAPFEKFVNLADARLGTRILSVTDDWFADANRLFQPTPAVWKEGVFDDNGKWMDGWESRRKRFEGYDSAVIRLGVAGTIKGVDIDTSFFTGNFPPSASLEACFLASGEPDENTAWTEVLPSVELQGNSHHYHEINNDQAFSHLRFNIYPDGGVARLRVYGVPHRDWSKVSADEQIDLVAALNGGRSIACSDEHYGSMSNILNPGRGVNMGDGWETARRRTPGNDWVIVALGHKGEVEKVIVDTLHFKGNYPDSCSIQGALVKGGTDSQIETQSLFWRELLPSQKLTMHAEHEFAEQIKAIGPITHIRLNVFPDGGVSRLRVLGKVAR</sequence>
<organism>
    <name type="scientific">Pseudomonas syringae pv. syringae (strain B728a)</name>
    <dbReference type="NCBI Taxonomy" id="205918"/>
    <lineage>
        <taxon>Bacteria</taxon>
        <taxon>Pseudomonadati</taxon>
        <taxon>Pseudomonadota</taxon>
        <taxon>Gammaproteobacteria</taxon>
        <taxon>Pseudomonadales</taxon>
        <taxon>Pseudomonadaceae</taxon>
        <taxon>Pseudomonas</taxon>
        <taxon>Pseudomonas syringae</taxon>
    </lineage>
</organism>
<keyword id="KW-0378">Hydrolase</keyword>
<keyword id="KW-0659">Purine metabolism</keyword>
<reference key="1">
    <citation type="journal article" date="2005" name="Proc. Natl. Acad. Sci. U.S.A.">
        <title>Comparison of the complete genome sequences of Pseudomonas syringae pv. syringae B728a and pv. tomato DC3000.</title>
        <authorList>
            <person name="Feil H."/>
            <person name="Feil W.S."/>
            <person name="Chain P."/>
            <person name="Larimer F."/>
            <person name="Dibartolo G."/>
            <person name="Copeland A."/>
            <person name="Lykidis A."/>
            <person name="Trong S."/>
            <person name="Nolan M."/>
            <person name="Goltsman E."/>
            <person name="Thiel J."/>
            <person name="Malfatti S."/>
            <person name="Loper J.E."/>
            <person name="Lapidus A."/>
            <person name="Detter J.C."/>
            <person name="Land M."/>
            <person name="Richardson P.M."/>
            <person name="Kyrpides N.C."/>
            <person name="Ivanova N."/>
            <person name="Lindow S.E."/>
        </authorList>
    </citation>
    <scope>NUCLEOTIDE SEQUENCE [LARGE SCALE GENOMIC DNA]</scope>
    <source>
        <strain>B728a</strain>
    </source>
</reference>
<proteinExistence type="inferred from homology"/>
<evidence type="ECO:0000255" key="1">
    <source>
        <dbReference type="HAMAP-Rule" id="MF_00813"/>
    </source>
</evidence>
<gene>
    <name evidence="1" type="primary">alc</name>
    <name type="ordered locus">Psyr_1807</name>
</gene>
<name>ALLC_PSEU2</name>
<protein>
    <recommendedName>
        <fullName evidence="1">Probable allantoicase</fullName>
        <ecNumber evidence="1">3.5.3.4</ecNumber>
    </recommendedName>
    <alternativeName>
        <fullName evidence="1">Allantoate amidinohydrolase</fullName>
    </alternativeName>
</protein>